<accession>A7GSF2</accession>
<keyword id="KW-0028">Amino-acid biosynthesis</keyword>
<keyword id="KW-0055">Arginine biosynthesis</keyword>
<keyword id="KW-0067">ATP-binding</keyword>
<keyword id="KW-0963">Cytoplasm</keyword>
<keyword id="KW-0418">Kinase</keyword>
<keyword id="KW-0547">Nucleotide-binding</keyword>
<keyword id="KW-0808">Transferase</keyword>
<dbReference type="EC" id="2.7.2.8" evidence="1"/>
<dbReference type="EMBL" id="CP000764">
    <property type="protein sequence ID" value="ABS23060.1"/>
    <property type="molecule type" value="Genomic_DNA"/>
</dbReference>
<dbReference type="RefSeq" id="WP_012095286.1">
    <property type="nucleotide sequence ID" value="NC_009674.1"/>
</dbReference>
<dbReference type="SMR" id="A7GSF2"/>
<dbReference type="STRING" id="315749.Bcer98_2827"/>
<dbReference type="GeneID" id="33898082"/>
<dbReference type="KEGG" id="bcy:Bcer98_2827"/>
<dbReference type="eggNOG" id="COG0548">
    <property type="taxonomic scope" value="Bacteria"/>
</dbReference>
<dbReference type="HOGENOM" id="CLU_053680_0_0_9"/>
<dbReference type="OrthoDB" id="9803155at2"/>
<dbReference type="UniPathway" id="UPA00068">
    <property type="reaction ID" value="UER00107"/>
</dbReference>
<dbReference type="Proteomes" id="UP000002300">
    <property type="component" value="Chromosome"/>
</dbReference>
<dbReference type="GO" id="GO:0005737">
    <property type="term" value="C:cytoplasm"/>
    <property type="evidence" value="ECO:0007669"/>
    <property type="project" value="UniProtKB-SubCell"/>
</dbReference>
<dbReference type="GO" id="GO:0003991">
    <property type="term" value="F:acetylglutamate kinase activity"/>
    <property type="evidence" value="ECO:0007669"/>
    <property type="project" value="UniProtKB-UniRule"/>
</dbReference>
<dbReference type="GO" id="GO:0005524">
    <property type="term" value="F:ATP binding"/>
    <property type="evidence" value="ECO:0007669"/>
    <property type="project" value="UniProtKB-UniRule"/>
</dbReference>
<dbReference type="GO" id="GO:0042450">
    <property type="term" value="P:arginine biosynthetic process via ornithine"/>
    <property type="evidence" value="ECO:0007669"/>
    <property type="project" value="UniProtKB-UniRule"/>
</dbReference>
<dbReference type="GO" id="GO:0006526">
    <property type="term" value="P:L-arginine biosynthetic process"/>
    <property type="evidence" value="ECO:0007669"/>
    <property type="project" value="UniProtKB-UniPathway"/>
</dbReference>
<dbReference type="CDD" id="cd04238">
    <property type="entry name" value="AAK_NAGK-like"/>
    <property type="match status" value="1"/>
</dbReference>
<dbReference type="Gene3D" id="3.40.1160.10">
    <property type="entry name" value="Acetylglutamate kinase-like"/>
    <property type="match status" value="1"/>
</dbReference>
<dbReference type="HAMAP" id="MF_00082">
    <property type="entry name" value="ArgB"/>
    <property type="match status" value="1"/>
</dbReference>
<dbReference type="InterPro" id="IPR036393">
    <property type="entry name" value="AceGlu_kinase-like_sf"/>
</dbReference>
<dbReference type="InterPro" id="IPR004662">
    <property type="entry name" value="AcgluKinase_fam"/>
</dbReference>
<dbReference type="InterPro" id="IPR037528">
    <property type="entry name" value="ArgB"/>
</dbReference>
<dbReference type="InterPro" id="IPR001048">
    <property type="entry name" value="Asp/Glu/Uridylate_kinase"/>
</dbReference>
<dbReference type="NCBIfam" id="TIGR00761">
    <property type="entry name" value="argB"/>
    <property type="match status" value="1"/>
</dbReference>
<dbReference type="PANTHER" id="PTHR23342">
    <property type="entry name" value="N-ACETYLGLUTAMATE SYNTHASE"/>
    <property type="match status" value="1"/>
</dbReference>
<dbReference type="PANTHER" id="PTHR23342:SF0">
    <property type="entry name" value="N-ACETYLGLUTAMATE SYNTHASE, MITOCHONDRIAL"/>
    <property type="match status" value="1"/>
</dbReference>
<dbReference type="Pfam" id="PF00696">
    <property type="entry name" value="AA_kinase"/>
    <property type="match status" value="1"/>
</dbReference>
<dbReference type="PIRSF" id="PIRSF000728">
    <property type="entry name" value="NAGK"/>
    <property type="match status" value="1"/>
</dbReference>
<dbReference type="SUPFAM" id="SSF53633">
    <property type="entry name" value="Carbamate kinase-like"/>
    <property type="match status" value="1"/>
</dbReference>
<evidence type="ECO:0000255" key="1">
    <source>
        <dbReference type="HAMAP-Rule" id="MF_00082"/>
    </source>
</evidence>
<feature type="chain" id="PRO_1000075301" description="Acetylglutamate kinase">
    <location>
        <begin position="1"/>
        <end position="256"/>
    </location>
</feature>
<feature type="binding site" evidence="1">
    <location>
        <begin position="40"/>
        <end position="41"/>
    </location>
    <ligand>
        <name>substrate</name>
    </ligand>
</feature>
<feature type="binding site" evidence="1">
    <location>
        <position position="62"/>
    </location>
    <ligand>
        <name>substrate</name>
    </ligand>
</feature>
<feature type="binding site" evidence="1">
    <location>
        <position position="153"/>
    </location>
    <ligand>
        <name>substrate</name>
    </ligand>
</feature>
<feature type="site" description="Transition state stabilizer" evidence="1">
    <location>
        <position position="8"/>
    </location>
</feature>
<feature type="site" description="Transition state stabilizer" evidence="1">
    <location>
        <position position="212"/>
    </location>
</feature>
<reference key="1">
    <citation type="journal article" date="2008" name="Chem. Biol. Interact.">
        <title>Extending the Bacillus cereus group genomics to putative food-borne pathogens of different toxicity.</title>
        <authorList>
            <person name="Lapidus A."/>
            <person name="Goltsman E."/>
            <person name="Auger S."/>
            <person name="Galleron N."/>
            <person name="Segurens B."/>
            <person name="Dossat C."/>
            <person name="Land M.L."/>
            <person name="Broussolle V."/>
            <person name="Brillard J."/>
            <person name="Guinebretiere M.-H."/>
            <person name="Sanchis V."/>
            <person name="Nguen-the C."/>
            <person name="Lereclus D."/>
            <person name="Richardson P."/>
            <person name="Wincker P."/>
            <person name="Weissenbach J."/>
            <person name="Ehrlich S.D."/>
            <person name="Sorokin A."/>
        </authorList>
    </citation>
    <scope>NUCLEOTIDE SEQUENCE [LARGE SCALE GENOMIC DNA]</scope>
    <source>
        <strain>DSM 22905 / CIP 110041 / 391-98 / NVH 391-98</strain>
    </source>
</reference>
<comment type="function">
    <text evidence="1">Catalyzes the ATP-dependent phosphorylation of N-acetyl-L-glutamate.</text>
</comment>
<comment type="catalytic activity">
    <reaction evidence="1">
        <text>N-acetyl-L-glutamate + ATP = N-acetyl-L-glutamyl 5-phosphate + ADP</text>
        <dbReference type="Rhea" id="RHEA:14629"/>
        <dbReference type="ChEBI" id="CHEBI:30616"/>
        <dbReference type="ChEBI" id="CHEBI:44337"/>
        <dbReference type="ChEBI" id="CHEBI:57936"/>
        <dbReference type="ChEBI" id="CHEBI:456216"/>
        <dbReference type="EC" id="2.7.2.8"/>
    </reaction>
</comment>
<comment type="pathway">
    <text evidence="1">Amino-acid biosynthesis; L-arginine biosynthesis; N(2)-acetyl-L-ornithine from L-glutamate: step 2/4.</text>
</comment>
<comment type="subcellular location">
    <subcellularLocation>
        <location evidence="1">Cytoplasm</location>
    </subcellularLocation>
</comment>
<comment type="similarity">
    <text evidence="1">Belongs to the acetylglutamate kinase family. ArgB subfamily.</text>
</comment>
<name>ARGB_BACCN</name>
<protein>
    <recommendedName>
        <fullName evidence="1">Acetylglutamate kinase</fullName>
        <ecNumber evidence="1">2.7.2.8</ecNumber>
    </recommendedName>
    <alternativeName>
        <fullName evidence="1">N-acetyl-L-glutamate 5-phosphotransferase</fullName>
    </alternativeName>
    <alternativeName>
        <fullName evidence="1">NAG kinase</fullName>
        <shortName evidence="1">NAGK</shortName>
    </alternativeName>
</protein>
<sequence>MNECIVIKCGGSMLERLDSTFFHCIEKLKRKYRIVIVHGGGPDIDKILKKLQIPIEKKHGLRVTSQEVMEVVQMVLCGSTNKNLVQNFQRYGLPAIGISGCDGKLLQAKPLNKKIGYVGEVSKVESSLLEGVLNLNYIPIIAPIGIGEEQVYNINADIAAAGIAAALRVKELIFITDVDGLLYEGKLVKKTDEIEILDMIEKEIITGGMIPKVQAALVALRMGIQSVSIVNGTKNFIGLTGEWIGTTVTRGRLQYE</sequence>
<organism>
    <name type="scientific">Bacillus cytotoxicus (strain DSM 22905 / CIP 110041 / 391-98 / NVH 391-98)</name>
    <dbReference type="NCBI Taxonomy" id="315749"/>
    <lineage>
        <taxon>Bacteria</taxon>
        <taxon>Bacillati</taxon>
        <taxon>Bacillota</taxon>
        <taxon>Bacilli</taxon>
        <taxon>Bacillales</taxon>
        <taxon>Bacillaceae</taxon>
        <taxon>Bacillus</taxon>
        <taxon>Bacillus cereus group</taxon>
    </lineage>
</organism>
<gene>
    <name evidence="1" type="primary">argB</name>
    <name type="ordered locus">Bcer98_2827</name>
</gene>
<proteinExistence type="inferred from homology"/>